<reference key="1">
    <citation type="submission" date="2005-09" db="EMBL/GenBank/DDBJ databases">
        <title>Complete sequence of chromosome 2 of Rhodobacter sphaeroides 2.4.1.</title>
        <authorList>
            <person name="Copeland A."/>
            <person name="Lucas S."/>
            <person name="Lapidus A."/>
            <person name="Barry K."/>
            <person name="Detter J.C."/>
            <person name="Glavina T."/>
            <person name="Hammon N."/>
            <person name="Israni S."/>
            <person name="Pitluck S."/>
            <person name="Richardson P."/>
            <person name="Mackenzie C."/>
            <person name="Choudhary M."/>
            <person name="Larimer F."/>
            <person name="Hauser L.J."/>
            <person name="Land M."/>
            <person name="Donohue T.J."/>
            <person name="Kaplan S."/>
        </authorList>
    </citation>
    <scope>NUCLEOTIDE SEQUENCE [LARGE SCALE GENOMIC DNA]</scope>
    <source>
        <strain>ATCC 17023 / DSM 158 / JCM 6121 / CCUG 31486 / LMG 2827 / NBRC 12203 / NCIMB 8253 / ATH 2.4.1.</strain>
    </source>
</reference>
<accession>Q3IW22</accession>
<name>ALAE_CERS4</name>
<organism>
    <name type="scientific">Cereibacter sphaeroides (strain ATCC 17023 / DSM 158 / JCM 6121 / CCUG 31486 / LMG 2827 / NBRC 12203 / NCIMB 8253 / ATH 2.4.1.)</name>
    <name type="common">Rhodobacter sphaeroides</name>
    <dbReference type="NCBI Taxonomy" id="272943"/>
    <lineage>
        <taxon>Bacteria</taxon>
        <taxon>Pseudomonadati</taxon>
        <taxon>Pseudomonadota</taxon>
        <taxon>Alphaproteobacteria</taxon>
        <taxon>Rhodobacterales</taxon>
        <taxon>Paracoccaceae</taxon>
        <taxon>Cereibacter</taxon>
    </lineage>
</organism>
<gene>
    <name evidence="1" type="primary">alaE</name>
    <name type="ordered locus">RHOS4_36940</name>
    <name type="ORF">RSP_3651</name>
</gene>
<dbReference type="EMBL" id="CP000144">
    <property type="protein sequence ID" value="ABA81262.1"/>
    <property type="molecule type" value="Genomic_DNA"/>
</dbReference>
<dbReference type="RefSeq" id="WP_011339503.1">
    <property type="nucleotide sequence ID" value="NC_007494.2"/>
</dbReference>
<dbReference type="RefSeq" id="YP_355163.1">
    <property type="nucleotide sequence ID" value="NC_007494.2"/>
</dbReference>
<dbReference type="STRING" id="272943.RSP_3651"/>
<dbReference type="EnsemblBacteria" id="ABA81262">
    <property type="protein sequence ID" value="ABA81262"/>
    <property type="gene ID" value="RSP_3651"/>
</dbReference>
<dbReference type="GeneID" id="3722141"/>
<dbReference type="KEGG" id="rsp:RSP_3651"/>
<dbReference type="PATRIC" id="fig|272943.9.peg.4091"/>
<dbReference type="eggNOG" id="ENOG502ZRFS">
    <property type="taxonomic scope" value="Bacteria"/>
</dbReference>
<dbReference type="OrthoDB" id="9006207at2"/>
<dbReference type="PhylomeDB" id="Q3IW22"/>
<dbReference type="Proteomes" id="UP000002703">
    <property type="component" value="Chromosome 2"/>
</dbReference>
<dbReference type="GO" id="GO:0005886">
    <property type="term" value="C:plasma membrane"/>
    <property type="evidence" value="ECO:0007669"/>
    <property type="project" value="UniProtKB-SubCell"/>
</dbReference>
<dbReference type="GO" id="GO:0034639">
    <property type="term" value="F:L-amino acid efflux transmembrane transporter activity"/>
    <property type="evidence" value="ECO:0007669"/>
    <property type="project" value="UniProtKB-UniRule"/>
</dbReference>
<dbReference type="GO" id="GO:0032973">
    <property type="term" value="P:amino acid export across plasma membrane"/>
    <property type="evidence" value="ECO:0007669"/>
    <property type="project" value="UniProtKB-UniRule"/>
</dbReference>
<dbReference type="HAMAP" id="MF_00914">
    <property type="entry name" value="L_Ala_exporter"/>
    <property type="match status" value="1"/>
</dbReference>
<dbReference type="InterPro" id="IPR010574">
    <property type="entry name" value="Ala_export_AlaE"/>
</dbReference>
<dbReference type="Pfam" id="PF06610">
    <property type="entry name" value="AlaE"/>
    <property type="match status" value="1"/>
</dbReference>
<proteinExistence type="inferred from homology"/>
<comment type="function">
    <text evidence="1">Exports L-alanine.</text>
</comment>
<comment type="subcellular location">
    <subcellularLocation>
        <location evidence="1">Cell inner membrane</location>
        <topology evidence="1">Multi-pass membrane protein</topology>
    </subcellularLocation>
</comment>
<comment type="similarity">
    <text evidence="1">Belongs to the AlaE exporter family.</text>
</comment>
<keyword id="KW-0029">Amino-acid transport</keyword>
<keyword id="KW-0997">Cell inner membrane</keyword>
<keyword id="KW-1003">Cell membrane</keyword>
<keyword id="KW-0472">Membrane</keyword>
<keyword id="KW-1185">Reference proteome</keyword>
<keyword id="KW-0812">Transmembrane</keyword>
<keyword id="KW-1133">Transmembrane helix</keyword>
<keyword id="KW-0813">Transport</keyword>
<feature type="chain" id="PRO_0000415627" description="L-alanine exporter AlaE">
    <location>
        <begin position="1"/>
        <end position="135"/>
    </location>
</feature>
<feature type="transmembrane region" description="Helical" evidence="1">
    <location>
        <begin position="9"/>
        <end position="29"/>
    </location>
</feature>
<feature type="transmembrane region" description="Helical" evidence="1">
    <location>
        <begin position="75"/>
        <end position="95"/>
    </location>
</feature>
<feature type="transmembrane region" description="Helical" evidence="1">
    <location>
        <begin position="96"/>
        <end position="116"/>
    </location>
</feature>
<sequence length="135" mass="14916">MRLFIIDTVATVIFFTAVATFSELLIAGMAPSEVLATRLLMVPVMVLTGRPYTRWRDWLVRRTAPRNRWSAFLTDILAFLSFQAPVYGATLLIAGASFAEAGTAIGSAIILMILLARPFGLFVEWTRSLFGVELS</sequence>
<evidence type="ECO:0000255" key="1">
    <source>
        <dbReference type="HAMAP-Rule" id="MF_00914"/>
    </source>
</evidence>
<protein>
    <recommendedName>
        <fullName evidence="1">L-alanine exporter AlaE</fullName>
    </recommendedName>
</protein>